<sequence length="676" mass="76095">MEDLNIKLNAHFAGKVVRKDLTKKIKEGANVPVYVLEYLLGMYCATDDEKSMNDGVQMVKKILSDNFVRPDEAEKVKSKVKELGKYTVIDKIGVKLNDKKDIYEAEFSNLGLNGVPISSHYVKEFDKLLAGGIWCIVKMEYYFDEESKGTSPFSIESVTPIQMPNMDLEEMFEQRRQFSKEEWIDVLIRSTGMEPTQLEDTVKWHLLERMVPLVENNYNLCELGPRGTGKSHIYKEISPNSILVSGGQTTVANLFYNMSTRKIGLVGMWDTVAFDEVAGITFKDKDGIQIMKDYMASGSFARGREEKNASASMVFVGNINQSVDVLLKTSHLFDPFPEAMAYDSAFFDRMHYYLPGWEIPKMRPEFFTNEYGFITDYLAEFLREMRKRSFSDAIDKYFRLGNNLNQRDVIAVRKTVSGLIKLLYPNGEYIKEDVEEVLRYALIGRRRVKEQLKKIGGMEFYDVNFSYIDNESMNEEFVSVPEQGGGTLIPEGMNKPGHIYTVARGKTGMIGTYKLETEVVSGNGKFEKTGLNSDRDAKESIDTAFRFFKANNKNISGTISTTTKDYLMHIQDIHGVGLTGELSLAAFIALCSGALNKPVQSQMVVLGSISISGTINKVEELANVLQVCFDSGAKKILLPMVSAVDIPTVPPELFAKFQIGFYQSAEDAVFKALGVE</sequence>
<feature type="chain" id="PRO_0000452159" description="Lon-like protease BrxL">
    <location>
        <begin position="1"/>
        <end position="676"/>
    </location>
</feature>
<evidence type="ECO:0000269" key="1">
    <source>
    </source>
</evidence>
<evidence type="ECO:0000303" key="2">
    <source>
    </source>
</evidence>
<evidence type="ECO:0000305" key="3"/>
<name>BRXL_BACCH</name>
<comment type="function">
    <text evidence="1">BREX systems (bacteriophage exclusion) provide immunity against bacteriophage. Part of a type 1 BREX system. This system allows phage adsorption but prevents phage DNA replication, without degradation of the phage DNA. Methylation of bacterial DNA by PglX probably guides self/non-self discrimination. When the brxA-brxB-brxC-pglX and pglZ-brxL operons are transformed into a susceptible B.subtilis strain (BEST7003) they confer resistance to bacteriophages SPbeta, SP16, Zeta, phi3T and SP02 and partial protection to phages SP01 and SP82G (these include lytic and temperate phage). They do not protect against phages phi105, rho10 or rho14. Additionally confers a very slight reduction in efficiency of plasmid transformation.</text>
</comment>
<comment type="induction">
    <text evidence="1">Part of the pglZ-brxL operon.</text>
</comment>
<comment type="similarity">
    <text evidence="3">Belongs to the BrxL family.</text>
</comment>
<accession>P0DUF5</accession>
<dbReference type="EMBL" id="ABDL02000007">
    <property type="protein sequence ID" value="EDZ57563.1"/>
    <property type="molecule type" value="Genomic_DNA"/>
</dbReference>
<dbReference type="SMR" id="P0DUF5"/>
<dbReference type="GO" id="GO:0005524">
    <property type="term" value="F:ATP binding"/>
    <property type="evidence" value="ECO:0007669"/>
    <property type="project" value="InterPro"/>
</dbReference>
<dbReference type="GO" id="GO:0004176">
    <property type="term" value="F:ATP-dependent peptidase activity"/>
    <property type="evidence" value="ECO:0007669"/>
    <property type="project" value="InterPro"/>
</dbReference>
<dbReference type="GO" id="GO:0004252">
    <property type="term" value="F:serine-type endopeptidase activity"/>
    <property type="evidence" value="ECO:0007669"/>
    <property type="project" value="InterPro"/>
</dbReference>
<dbReference type="GO" id="GO:0051607">
    <property type="term" value="P:defense response to virus"/>
    <property type="evidence" value="ECO:0007669"/>
    <property type="project" value="UniProtKB-KW"/>
</dbReference>
<dbReference type="GO" id="GO:0030163">
    <property type="term" value="P:protein catabolic process"/>
    <property type="evidence" value="ECO:0007669"/>
    <property type="project" value="InterPro"/>
</dbReference>
<dbReference type="GO" id="GO:0006508">
    <property type="term" value="P:proteolysis"/>
    <property type="evidence" value="ECO:0007669"/>
    <property type="project" value="UniProtKB-KW"/>
</dbReference>
<dbReference type="Gene3D" id="3.30.230.10">
    <property type="match status" value="1"/>
</dbReference>
<dbReference type="InterPro" id="IPR013473">
    <property type="entry name" value="BrxL"/>
</dbReference>
<dbReference type="InterPro" id="IPR014061">
    <property type="entry name" value="BrxL-like"/>
</dbReference>
<dbReference type="InterPro" id="IPR046838">
    <property type="entry name" value="BrxL_N"/>
</dbReference>
<dbReference type="InterPro" id="IPR008269">
    <property type="entry name" value="Lon_proteolytic"/>
</dbReference>
<dbReference type="InterPro" id="IPR027065">
    <property type="entry name" value="Lon_Prtase"/>
</dbReference>
<dbReference type="InterPro" id="IPR027417">
    <property type="entry name" value="P-loop_NTPase"/>
</dbReference>
<dbReference type="InterPro" id="IPR020568">
    <property type="entry name" value="Ribosomal_Su5_D2-typ_SF"/>
</dbReference>
<dbReference type="InterPro" id="IPR014721">
    <property type="entry name" value="Ribsml_uS5_D2-typ_fold_subgr"/>
</dbReference>
<dbReference type="NCBIfam" id="TIGR02688">
    <property type="entry name" value="BREX system Lon protease-like protein BrxL"/>
    <property type="match status" value="1"/>
</dbReference>
<dbReference type="NCBIfam" id="TIGR02653">
    <property type="entry name" value="Lon_rel_chp"/>
    <property type="match status" value="1"/>
</dbReference>
<dbReference type="PANTHER" id="PTHR10046">
    <property type="entry name" value="ATP DEPENDENT LON PROTEASE FAMILY MEMBER"/>
    <property type="match status" value="1"/>
</dbReference>
<dbReference type="Pfam" id="PF13337">
    <property type="entry name" value="BrxL_ATPase"/>
    <property type="match status" value="1"/>
</dbReference>
<dbReference type="Pfam" id="PF20442">
    <property type="entry name" value="BrxL_N"/>
    <property type="match status" value="1"/>
</dbReference>
<dbReference type="Pfam" id="PF05362">
    <property type="entry name" value="Lon_C"/>
    <property type="match status" value="1"/>
</dbReference>
<dbReference type="SUPFAM" id="SSF52540">
    <property type="entry name" value="P-loop containing nucleoside triphosphate hydrolases"/>
    <property type="match status" value="1"/>
</dbReference>
<dbReference type="SUPFAM" id="SSF54211">
    <property type="entry name" value="Ribosomal protein S5 domain 2-like"/>
    <property type="match status" value="1"/>
</dbReference>
<proteinExistence type="evidence at protein level"/>
<protein>
    <recommendedName>
        <fullName evidence="2">Lon-like protease BrxL</fullName>
    </recommendedName>
    <alternativeName>
        <fullName evidence="2">BREX protein BrxL</fullName>
    </alternativeName>
</protein>
<reference key="1">
    <citation type="submission" date="2008-09" db="EMBL/GenBank/DDBJ databases">
        <title>Genome sequence of Bacillus cereus H3081.97.</title>
        <authorList>
            <person name="Dodson R.J."/>
            <person name="Durkin A.S."/>
            <person name="Rosovitz M.J."/>
            <person name="Rasko D.A."/>
            <person name="Hoffmaster A."/>
            <person name="Ravel J."/>
            <person name="Sutton G."/>
        </authorList>
    </citation>
    <scope>NUCLEOTIDE SEQUENCE [LARGE SCALE GENOMIC DNA]</scope>
    <source>
        <strain>H3081.97</strain>
    </source>
</reference>
<reference key="2">
    <citation type="journal article" date="2015" name="EMBO J.">
        <title>BREX is a novel phage resistance system widespread in microbial genomes.</title>
        <authorList>
            <person name="Goldfarb T."/>
            <person name="Sberro H."/>
            <person name="Weinstock E."/>
            <person name="Cohen O."/>
            <person name="Doron S."/>
            <person name="Charpak-Amikam Y."/>
            <person name="Afik S."/>
            <person name="Ofir G."/>
            <person name="Sorek R."/>
        </authorList>
    </citation>
    <scope>FUNCTION IN ANTIVIRAL DEFENSE</scope>
    <scope>INDUCTION</scope>
    <scope>CLASSIFICATION AND NOMENCLATURE</scope>
    <source>
        <strain>H3081.97</strain>
    </source>
</reference>
<keyword id="KW-0051">Antiviral defense</keyword>
<keyword id="KW-0378">Hydrolase</keyword>
<keyword id="KW-0645">Protease</keyword>
<organism>
    <name type="scientific">Bacillus cereus (strain H3081.97)</name>
    <dbReference type="NCBI Taxonomy" id="451708"/>
    <lineage>
        <taxon>Bacteria</taxon>
        <taxon>Bacillati</taxon>
        <taxon>Bacillota</taxon>
        <taxon>Bacilli</taxon>
        <taxon>Bacillales</taxon>
        <taxon>Bacillaceae</taxon>
        <taxon>Bacillus</taxon>
        <taxon>Bacillus cereus group</taxon>
    </lineage>
</organism>
<gene>
    <name evidence="2" type="primary">brxL</name>
    <name type="ORF">BCH308197_0968</name>
</gene>